<dbReference type="EC" id="2.7.8.26" evidence="1"/>
<dbReference type="EMBL" id="CP001396">
    <property type="protein sequence ID" value="ACR62156.1"/>
    <property type="molecule type" value="Genomic_DNA"/>
</dbReference>
<dbReference type="RefSeq" id="WP_001326708.1">
    <property type="nucleotide sequence ID" value="NC_012759.1"/>
</dbReference>
<dbReference type="KEGG" id="ebw:BWG_1786"/>
<dbReference type="HOGENOM" id="CLU_057426_1_1_6"/>
<dbReference type="UniPathway" id="UPA00148">
    <property type="reaction ID" value="UER00238"/>
</dbReference>
<dbReference type="GO" id="GO:0005886">
    <property type="term" value="C:plasma membrane"/>
    <property type="evidence" value="ECO:0007669"/>
    <property type="project" value="UniProtKB-SubCell"/>
</dbReference>
<dbReference type="GO" id="GO:0051073">
    <property type="term" value="F:adenosylcobinamide-GDP ribazoletransferase activity"/>
    <property type="evidence" value="ECO:0007669"/>
    <property type="project" value="UniProtKB-UniRule"/>
</dbReference>
<dbReference type="GO" id="GO:0008818">
    <property type="term" value="F:cobalamin 5'-phosphate synthase activity"/>
    <property type="evidence" value="ECO:0007669"/>
    <property type="project" value="UniProtKB-UniRule"/>
</dbReference>
<dbReference type="GO" id="GO:0009236">
    <property type="term" value="P:cobalamin biosynthetic process"/>
    <property type="evidence" value="ECO:0007669"/>
    <property type="project" value="UniProtKB-UniRule"/>
</dbReference>
<dbReference type="HAMAP" id="MF_00719">
    <property type="entry name" value="CobS"/>
    <property type="match status" value="1"/>
</dbReference>
<dbReference type="InterPro" id="IPR003805">
    <property type="entry name" value="CobS"/>
</dbReference>
<dbReference type="NCBIfam" id="TIGR00317">
    <property type="entry name" value="cobS"/>
    <property type="match status" value="1"/>
</dbReference>
<dbReference type="PANTHER" id="PTHR34148">
    <property type="entry name" value="ADENOSYLCOBINAMIDE-GDP RIBAZOLETRANSFERASE"/>
    <property type="match status" value="1"/>
</dbReference>
<dbReference type="PANTHER" id="PTHR34148:SF1">
    <property type="entry name" value="ADENOSYLCOBINAMIDE-GDP RIBAZOLETRANSFERASE"/>
    <property type="match status" value="1"/>
</dbReference>
<dbReference type="Pfam" id="PF02654">
    <property type="entry name" value="CobS"/>
    <property type="match status" value="1"/>
</dbReference>
<evidence type="ECO:0000255" key="1">
    <source>
        <dbReference type="HAMAP-Rule" id="MF_00719"/>
    </source>
</evidence>
<accession>C4ZQQ5</accession>
<reference key="1">
    <citation type="journal article" date="2009" name="J. Bacteriol.">
        <title>Genomic sequencing reveals regulatory mutations and recombinational events in the widely used MC4100 lineage of Escherichia coli K-12.</title>
        <authorList>
            <person name="Ferenci T."/>
            <person name="Zhou Z."/>
            <person name="Betteridge T."/>
            <person name="Ren Y."/>
            <person name="Liu Y."/>
            <person name="Feng L."/>
            <person name="Reeves P.R."/>
            <person name="Wang L."/>
        </authorList>
    </citation>
    <scope>NUCLEOTIDE SEQUENCE [LARGE SCALE GENOMIC DNA]</scope>
    <source>
        <strain>K12 / MC4100 / BW2952</strain>
    </source>
</reference>
<gene>
    <name evidence="1" type="primary">cobS</name>
    <name type="ordered locus">BWG_1786</name>
</gene>
<sequence length="247" mass="26386">MSKLFWAMLSFITRLPVPRRWSQGLDFEHYSRGIITFPLIGLLLGAISGLVFMVLQAWCGAPLAALFSVLVLVLMTGGFHLDGLADTCDGVFSARSRDRMLEIMRDSRLGTHGGLALIFVVLAKILVLSELALRGESILASLAAACAVSRGTAALLMYRHRYAREEGLGNVFIGKIDGRQTCVTLGLAAIFAAVLLPGMHGVAAMVVTMVAIFILGQLLKRTLGGQTGDTLGAAIELGELVFLLALL</sequence>
<proteinExistence type="inferred from homology"/>
<name>COBS_ECOBW</name>
<organism>
    <name type="scientific">Escherichia coli (strain K12 / MC4100 / BW2952)</name>
    <dbReference type="NCBI Taxonomy" id="595496"/>
    <lineage>
        <taxon>Bacteria</taxon>
        <taxon>Pseudomonadati</taxon>
        <taxon>Pseudomonadota</taxon>
        <taxon>Gammaproteobacteria</taxon>
        <taxon>Enterobacterales</taxon>
        <taxon>Enterobacteriaceae</taxon>
        <taxon>Escherichia</taxon>
    </lineage>
</organism>
<protein>
    <recommendedName>
        <fullName evidence="1">Adenosylcobinamide-GDP ribazoletransferase</fullName>
        <ecNumber evidence="1">2.7.8.26</ecNumber>
    </recommendedName>
    <alternativeName>
        <fullName evidence="1">Cobalamin synthase</fullName>
    </alternativeName>
    <alternativeName>
        <fullName evidence="1">Cobalamin-5'-phosphate synthase</fullName>
    </alternativeName>
</protein>
<keyword id="KW-0997">Cell inner membrane</keyword>
<keyword id="KW-1003">Cell membrane</keyword>
<keyword id="KW-0169">Cobalamin biosynthesis</keyword>
<keyword id="KW-0460">Magnesium</keyword>
<keyword id="KW-0472">Membrane</keyword>
<keyword id="KW-0808">Transferase</keyword>
<keyword id="KW-0812">Transmembrane</keyword>
<keyword id="KW-1133">Transmembrane helix</keyword>
<comment type="function">
    <text evidence="1">Joins adenosylcobinamide-GDP and alpha-ribazole to generate adenosylcobalamin (Ado-cobalamin). Also synthesizes adenosylcobalamin 5'-phosphate from adenosylcobinamide-GDP and alpha-ribazole 5'-phosphate.</text>
</comment>
<comment type="catalytic activity">
    <reaction evidence="1">
        <text>alpha-ribazole + adenosylcob(III)inamide-GDP = adenosylcob(III)alamin + GMP + H(+)</text>
        <dbReference type="Rhea" id="RHEA:16049"/>
        <dbReference type="ChEBI" id="CHEBI:10329"/>
        <dbReference type="ChEBI" id="CHEBI:15378"/>
        <dbReference type="ChEBI" id="CHEBI:18408"/>
        <dbReference type="ChEBI" id="CHEBI:58115"/>
        <dbReference type="ChEBI" id="CHEBI:60487"/>
        <dbReference type="EC" id="2.7.8.26"/>
    </reaction>
</comment>
<comment type="catalytic activity">
    <reaction evidence="1">
        <text>alpha-ribazole 5'-phosphate + adenosylcob(III)inamide-GDP = adenosylcob(III)alamin 5'-phosphate + GMP + H(+)</text>
        <dbReference type="Rhea" id="RHEA:23560"/>
        <dbReference type="ChEBI" id="CHEBI:15378"/>
        <dbReference type="ChEBI" id="CHEBI:57918"/>
        <dbReference type="ChEBI" id="CHEBI:58115"/>
        <dbReference type="ChEBI" id="CHEBI:60487"/>
        <dbReference type="ChEBI" id="CHEBI:60493"/>
        <dbReference type="EC" id="2.7.8.26"/>
    </reaction>
</comment>
<comment type="cofactor">
    <cofactor evidence="1">
        <name>Mg(2+)</name>
        <dbReference type="ChEBI" id="CHEBI:18420"/>
    </cofactor>
</comment>
<comment type="pathway">
    <text evidence="1">Cofactor biosynthesis; adenosylcobalamin biosynthesis; adenosylcobalamin from cob(II)yrinate a,c-diamide: step 7/7.</text>
</comment>
<comment type="subcellular location">
    <subcellularLocation>
        <location evidence="1">Cell inner membrane</location>
        <topology evidence="1">Multi-pass membrane protein</topology>
    </subcellularLocation>
</comment>
<comment type="similarity">
    <text evidence="1">Belongs to the CobS family.</text>
</comment>
<feature type="chain" id="PRO_1000212691" description="Adenosylcobinamide-GDP ribazoletransferase">
    <location>
        <begin position="1"/>
        <end position="247"/>
    </location>
</feature>
<feature type="transmembrane region" description="Helical" evidence="1">
    <location>
        <begin position="34"/>
        <end position="54"/>
    </location>
</feature>
<feature type="transmembrane region" description="Helical" evidence="1">
    <location>
        <begin position="59"/>
        <end position="79"/>
    </location>
</feature>
<feature type="transmembrane region" description="Helical" evidence="1">
    <location>
        <begin position="113"/>
        <end position="133"/>
    </location>
</feature>
<feature type="transmembrane region" description="Helical" evidence="1">
    <location>
        <begin position="138"/>
        <end position="158"/>
    </location>
</feature>
<feature type="transmembrane region" description="Helical" evidence="1">
    <location>
        <begin position="194"/>
        <end position="214"/>
    </location>
</feature>